<name>LPRM_ECOLX</name>
<reference key="1">
    <citation type="journal article" date="1988" name="J. Bacteriol.">
        <title>Evidence for natural gene transfer from Gram-positive cocci to Escherichia coli.</title>
        <authorList>
            <person name="Brisson-Noel A."/>
            <person name="Arthur M."/>
            <person name="Courvalin P."/>
        </authorList>
    </citation>
    <scope>NUCLEOTIDE SEQUENCE [GENOMIC DNA]</scope>
</reference>
<organism>
    <name type="scientific">Escherichia coli</name>
    <dbReference type="NCBI Taxonomy" id="562"/>
    <lineage>
        <taxon>Bacteria</taxon>
        <taxon>Pseudomonadati</taxon>
        <taxon>Pseudomonadota</taxon>
        <taxon>Gammaproteobacteria</taxon>
        <taxon>Enterobacterales</taxon>
        <taxon>Enterobacteriaceae</taxon>
        <taxon>Escherichia</taxon>
    </lineage>
</organism>
<dbReference type="EMBL" id="M19270">
    <property type="protein sequence ID" value="AAA25633.1"/>
    <property type="molecule type" value="Genomic_DNA"/>
</dbReference>
<dbReference type="PIR" id="A27739">
    <property type="entry name" value="A27739"/>
</dbReference>
<dbReference type="RefSeq" id="WP_013362819.1">
    <property type="nucleotide sequence ID" value="NZ_WVUR01000152.1"/>
</dbReference>
<dbReference type="BindingDB" id="P10739"/>
<dbReference type="ChEMBL" id="CHEMBL5291611"/>
<dbReference type="GO" id="GO:0046677">
    <property type="term" value="P:response to antibiotic"/>
    <property type="evidence" value="ECO:0007669"/>
    <property type="project" value="UniProtKB-KW"/>
</dbReference>
<dbReference type="InterPro" id="IPR009391">
    <property type="entry name" value="ErmCL"/>
</dbReference>
<dbReference type="Pfam" id="PF06308">
    <property type="entry name" value="ErmC"/>
    <property type="match status" value="1"/>
</dbReference>
<keyword id="KW-0046">Antibiotic resistance</keyword>
<keyword id="KW-0428">Leader peptide</keyword>
<accession>P10739</accession>
<protein>
    <recommendedName>
        <fullName>23S rRNA methylase leader peptide</fullName>
    </recommendedName>
    <alternativeName>
        <fullName>Erythromycin resistance leader peptide</fullName>
    </alternativeName>
</protein>
<feature type="peptide" id="PRO_0000044766" description="23S rRNA methylase leader peptide">
    <location>
        <begin position="1"/>
        <end position="31"/>
    </location>
</feature>
<comment type="function">
    <text>This peptide is involved in the control mechanism of the synthesis of the erythromycin resistance protein.</text>
</comment>
<sequence length="31" mass="3803">MLVFQMRYQMRYVDKTSTVLKQTKKSDYADK</sequence>
<proteinExistence type="predicted"/>
<gene>
    <name type="primary">ermC</name>
</gene>